<dbReference type="EC" id="4.2.3.5" evidence="1"/>
<dbReference type="EMBL" id="BA000023">
    <property type="protein sequence ID" value="BAK54774.1"/>
    <property type="molecule type" value="Genomic_DNA"/>
</dbReference>
<dbReference type="RefSeq" id="WP_010980358.1">
    <property type="nucleotide sequence ID" value="NC_003106.2"/>
</dbReference>
<dbReference type="SMR" id="Q96Y94"/>
<dbReference type="STRING" id="273063.STK_22740"/>
<dbReference type="GeneID" id="1460356"/>
<dbReference type="KEGG" id="sto:STK_22740"/>
<dbReference type="PATRIC" id="fig|273063.9.peg.2578"/>
<dbReference type="eggNOG" id="arCOG04133">
    <property type="taxonomic scope" value="Archaea"/>
</dbReference>
<dbReference type="OrthoDB" id="33049at2157"/>
<dbReference type="UniPathway" id="UPA00053">
    <property type="reaction ID" value="UER00090"/>
</dbReference>
<dbReference type="Proteomes" id="UP000001015">
    <property type="component" value="Chromosome"/>
</dbReference>
<dbReference type="GO" id="GO:0005829">
    <property type="term" value="C:cytosol"/>
    <property type="evidence" value="ECO:0007669"/>
    <property type="project" value="TreeGrafter"/>
</dbReference>
<dbReference type="GO" id="GO:0004107">
    <property type="term" value="F:chorismate synthase activity"/>
    <property type="evidence" value="ECO:0007669"/>
    <property type="project" value="UniProtKB-UniRule"/>
</dbReference>
<dbReference type="GO" id="GO:0010181">
    <property type="term" value="F:FMN binding"/>
    <property type="evidence" value="ECO:0007669"/>
    <property type="project" value="TreeGrafter"/>
</dbReference>
<dbReference type="GO" id="GO:0008652">
    <property type="term" value="P:amino acid biosynthetic process"/>
    <property type="evidence" value="ECO:0007669"/>
    <property type="project" value="UniProtKB-KW"/>
</dbReference>
<dbReference type="GO" id="GO:0009073">
    <property type="term" value="P:aromatic amino acid family biosynthetic process"/>
    <property type="evidence" value="ECO:0007669"/>
    <property type="project" value="UniProtKB-KW"/>
</dbReference>
<dbReference type="GO" id="GO:0009423">
    <property type="term" value="P:chorismate biosynthetic process"/>
    <property type="evidence" value="ECO:0007669"/>
    <property type="project" value="UniProtKB-UniRule"/>
</dbReference>
<dbReference type="CDD" id="cd07304">
    <property type="entry name" value="Chorismate_synthase"/>
    <property type="match status" value="1"/>
</dbReference>
<dbReference type="FunFam" id="3.60.150.10:FF:000002">
    <property type="entry name" value="Chorismate synthase"/>
    <property type="match status" value="1"/>
</dbReference>
<dbReference type="Gene3D" id="3.60.150.10">
    <property type="entry name" value="Chorismate synthase AroC"/>
    <property type="match status" value="1"/>
</dbReference>
<dbReference type="HAMAP" id="MF_00300">
    <property type="entry name" value="Chorismate_synth"/>
    <property type="match status" value="1"/>
</dbReference>
<dbReference type="InterPro" id="IPR000453">
    <property type="entry name" value="Chorismate_synth"/>
</dbReference>
<dbReference type="InterPro" id="IPR035904">
    <property type="entry name" value="Chorismate_synth_AroC_sf"/>
</dbReference>
<dbReference type="InterPro" id="IPR020541">
    <property type="entry name" value="Chorismate_synthase_CS"/>
</dbReference>
<dbReference type="NCBIfam" id="TIGR00033">
    <property type="entry name" value="aroC"/>
    <property type="match status" value="1"/>
</dbReference>
<dbReference type="NCBIfam" id="NF003793">
    <property type="entry name" value="PRK05382.1"/>
    <property type="match status" value="1"/>
</dbReference>
<dbReference type="PANTHER" id="PTHR21085">
    <property type="entry name" value="CHORISMATE SYNTHASE"/>
    <property type="match status" value="1"/>
</dbReference>
<dbReference type="PANTHER" id="PTHR21085:SF0">
    <property type="entry name" value="CHORISMATE SYNTHASE"/>
    <property type="match status" value="1"/>
</dbReference>
<dbReference type="Pfam" id="PF01264">
    <property type="entry name" value="Chorismate_synt"/>
    <property type="match status" value="1"/>
</dbReference>
<dbReference type="PIRSF" id="PIRSF001456">
    <property type="entry name" value="Chorismate_synth"/>
    <property type="match status" value="1"/>
</dbReference>
<dbReference type="SUPFAM" id="SSF103263">
    <property type="entry name" value="Chorismate synthase, AroC"/>
    <property type="match status" value="1"/>
</dbReference>
<dbReference type="PROSITE" id="PS00787">
    <property type="entry name" value="CHORISMATE_SYNTHASE_1"/>
    <property type="match status" value="1"/>
</dbReference>
<dbReference type="PROSITE" id="PS00789">
    <property type="entry name" value="CHORISMATE_SYNTHASE_3"/>
    <property type="match status" value="1"/>
</dbReference>
<gene>
    <name evidence="1" type="primary">aroC</name>
    <name type="ordered locus">STK_22740</name>
</gene>
<feature type="chain" id="PRO_0000140698" description="Chorismate synthase">
    <location>
        <begin position="1"/>
        <end position="390"/>
    </location>
</feature>
<feature type="binding site" evidence="1">
    <location>
        <position position="48"/>
    </location>
    <ligand>
        <name>NADP(+)</name>
        <dbReference type="ChEBI" id="CHEBI:58349"/>
    </ligand>
</feature>
<feature type="binding site" evidence="1">
    <location>
        <begin position="126"/>
        <end position="128"/>
    </location>
    <ligand>
        <name>FMN</name>
        <dbReference type="ChEBI" id="CHEBI:58210"/>
    </ligand>
</feature>
<feature type="binding site" evidence="1">
    <location>
        <position position="286"/>
    </location>
    <ligand>
        <name>FMN</name>
        <dbReference type="ChEBI" id="CHEBI:58210"/>
    </ligand>
</feature>
<feature type="binding site" evidence="1">
    <location>
        <begin position="301"/>
        <end position="305"/>
    </location>
    <ligand>
        <name>FMN</name>
        <dbReference type="ChEBI" id="CHEBI:58210"/>
    </ligand>
</feature>
<feature type="binding site" evidence="1">
    <location>
        <position position="328"/>
    </location>
    <ligand>
        <name>FMN</name>
        <dbReference type="ChEBI" id="CHEBI:58210"/>
    </ligand>
</feature>
<accession>Q96Y94</accession>
<accession>F9VPC7</accession>
<reference key="1">
    <citation type="journal article" date="2001" name="DNA Res.">
        <title>Complete genome sequence of an aerobic thermoacidophilic Crenarchaeon, Sulfolobus tokodaii strain7.</title>
        <authorList>
            <person name="Kawarabayasi Y."/>
            <person name="Hino Y."/>
            <person name="Horikawa H."/>
            <person name="Jin-no K."/>
            <person name="Takahashi M."/>
            <person name="Sekine M."/>
            <person name="Baba S."/>
            <person name="Ankai A."/>
            <person name="Kosugi H."/>
            <person name="Hosoyama A."/>
            <person name="Fukui S."/>
            <person name="Nagai Y."/>
            <person name="Nishijima K."/>
            <person name="Otsuka R."/>
            <person name="Nakazawa H."/>
            <person name="Takamiya M."/>
            <person name="Kato Y."/>
            <person name="Yoshizawa T."/>
            <person name="Tanaka T."/>
            <person name="Kudoh Y."/>
            <person name="Yamazaki J."/>
            <person name="Kushida N."/>
            <person name="Oguchi A."/>
            <person name="Aoki K."/>
            <person name="Masuda S."/>
            <person name="Yanagii M."/>
            <person name="Nishimura M."/>
            <person name="Yamagishi A."/>
            <person name="Oshima T."/>
            <person name="Kikuchi H."/>
        </authorList>
    </citation>
    <scope>NUCLEOTIDE SEQUENCE [LARGE SCALE GENOMIC DNA]</scope>
    <source>
        <strain>DSM 16993 / JCM 10545 / NBRC 100140 / 7</strain>
    </source>
</reference>
<organism>
    <name type="scientific">Sulfurisphaera tokodaii (strain DSM 16993 / JCM 10545 / NBRC 100140 / 7)</name>
    <name type="common">Sulfolobus tokodaii</name>
    <dbReference type="NCBI Taxonomy" id="273063"/>
    <lineage>
        <taxon>Archaea</taxon>
        <taxon>Thermoproteota</taxon>
        <taxon>Thermoprotei</taxon>
        <taxon>Sulfolobales</taxon>
        <taxon>Sulfolobaceae</taxon>
        <taxon>Sulfurisphaera</taxon>
    </lineage>
</organism>
<evidence type="ECO:0000255" key="1">
    <source>
        <dbReference type="HAMAP-Rule" id="MF_00300"/>
    </source>
</evidence>
<proteinExistence type="inferred from homology"/>
<keyword id="KW-0028">Amino-acid biosynthesis</keyword>
<keyword id="KW-0057">Aromatic amino acid biosynthesis</keyword>
<keyword id="KW-0274">FAD</keyword>
<keyword id="KW-0285">Flavoprotein</keyword>
<keyword id="KW-0288">FMN</keyword>
<keyword id="KW-0456">Lyase</keyword>
<keyword id="KW-0521">NADP</keyword>
<keyword id="KW-1185">Reference proteome</keyword>
<protein>
    <recommendedName>
        <fullName evidence="1">Chorismate synthase</fullName>
        <shortName evidence="1">CS</shortName>
        <ecNumber evidence="1">4.2.3.5</ecNumber>
    </recommendedName>
    <alternativeName>
        <fullName evidence="1">5-enolpyruvylshikimate-3-phosphate phospholyase</fullName>
    </alternativeName>
</protein>
<sequence length="390" mass="43019">MPGNSFGELFRITTFGESHGPMVGVVIDGVPAGLPIKKEDIEFELSFRRPGRQFVTGRREKDEPEIVSGVYNGRTTGAPITILVKNTDVISSLYEEIHYKPRPGHADLPYIMKYGFENWDYRGGGRASARETVGRVAASAIAKKLLMLTDTWIAGHLKSLGYVELNEPVTFEEVLCSKYSPVRASKKWLEKKYEELVKQATVEGDSWGGIAEIIVRNPPIGLGEPVFDKLKADLAKALLSIPAVMGFEYGLGFNAAKMKGSEANDEIVKKGDKYRWKFNNSGGILGGLSTGEDILVRCAFKPTSSIRKPQKTIDLRTGEETTISVIGRHDPAVAIRGVSVAEAMVSLVIVDHAMRAGYIPTVRISDDQIKIIEERWNKYISLCKPTQVSQ</sequence>
<name>AROC_SULTO</name>
<comment type="function">
    <text evidence="1">Catalyzes the anti-1,4-elimination of the C-3 phosphate and the C-6 proR hydrogen from 5-enolpyruvylshikimate-3-phosphate (EPSP) to yield chorismate, which is the branch point compound that serves as the starting substrate for the three terminal pathways of aromatic amino acid biosynthesis. This reaction introduces a second double bond into the aromatic ring system.</text>
</comment>
<comment type="catalytic activity">
    <reaction evidence="1">
        <text>5-O-(1-carboxyvinyl)-3-phosphoshikimate = chorismate + phosphate</text>
        <dbReference type="Rhea" id="RHEA:21020"/>
        <dbReference type="ChEBI" id="CHEBI:29748"/>
        <dbReference type="ChEBI" id="CHEBI:43474"/>
        <dbReference type="ChEBI" id="CHEBI:57701"/>
        <dbReference type="EC" id="4.2.3.5"/>
    </reaction>
</comment>
<comment type="cofactor">
    <cofactor evidence="1">
        <name>FMNH2</name>
        <dbReference type="ChEBI" id="CHEBI:57618"/>
    </cofactor>
    <text evidence="1">Reduced FMN (FMNH(2)).</text>
</comment>
<comment type="pathway">
    <text evidence="1">Metabolic intermediate biosynthesis; chorismate biosynthesis; chorismate from D-erythrose 4-phosphate and phosphoenolpyruvate: step 7/7.</text>
</comment>
<comment type="similarity">
    <text evidence="1">Belongs to the chorismate synthase family.</text>
</comment>